<comment type="function">
    <text evidence="2 10">Cell adhesion molecule which is required for leukocyte transendothelial migration (TEM) under most inflammatory conditions (By similarity). Tyr-679 plays a critical role in TEM and is required for efficient trafficking of PECAM1 to and from the lateral border recycling compartment (LBRC) and is also essential for the LBRC membrane to be targeted around migrating leukocytes (By similarity). Trans-homophilic interaction may play a role in endothelial cell-cell adhesion via cell junctions (By similarity). Heterophilic interaction with CD177 plays a role in transendothelial migration of neutrophils (By similarity). Homophilic ligation of PECAM1 prevents macrophage-mediated phagocytosis of neighboring viable leukocytes by transmitting a detachment signal (By similarity). Promotes macrophage-mediated phagocytosis of apoptotic leukocytes by tethering them to the phagocytic cells; PECAM1-mediated detachment signal appears to be disabled in apoptotic leukocytes (By similarity). Modulates bradykinin receptor BDKRB2 activation (By similarity). Regulates bradykinin- and hyperosmotic shock-induced ERK1/2 activation in endothelial cells (By similarity). Induces susceptibility to atherosclerosis (PubMed:19048083).</text>
</comment>
<comment type="subunit">
    <text evidence="2 3">Trans-homodimer (via Ig-like C2-type 1 and Ig-like C2-type 2 domains); trans-homodimerization is required for cell-cell interaction. Forms a complex with BDKRB2 and GNAQ. Interacts with BDKRB2 and GNAQ. Interacts with PTPN11; Tyr-702 is critical for PTPN11 recruitment. Interacts with FER. Interacts with CD177; the interaction is Ca(2+)-dependent; the interaction is direct.</text>
</comment>
<comment type="subcellular location">
    <subcellularLocation>
        <location evidence="2">Cell membrane</location>
        <topology evidence="2">Single-pass type I membrane protein</topology>
    </subcellularLocation>
    <subcellularLocation>
        <location evidence="2">Membrane raft</location>
    </subcellularLocation>
    <subcellularLocation>
        <location evidence="2">Cell junction</location>
    </subcellularLocation>
    <text evidence="2">Localizes to the lateral border recycling compartment (LBRC) and recycles from the LBRC to the junction in resting endothelial cells. Cell surface expression on neutrophils is down-regulated upon fMLP or CXCL8/IL8-mediated stimulation.</text>
</comment>
<comment type="alternative products">
    <event type="alternative splicing"/>
    <isoform>
        <id>Q08481-1</id>
        <name>1</name>
        <sequence type="displayed"/>
    </isoform>
    <isoform>
        <id>Q08481-2</id>
        <name>2</name>
        <sequence type="described" ref="VSP_038724"/>
    </isoform>
    <isoform>
        <id>Q08481-3</id>
        <name>3</name>
        <sequence type="described" ref="VSP_038725"/>
    </isoform>
    <isoform>
        <id>Q08481-4</id>
        <name>4</name>
        <sequence type="described" ref="VSP_038723"/>
    </isoform>
</comment>
<comment type="tissue specificity">
    <molecule>Isoform 1</molecule>
    <text evidence="9">Expressed in lung and platelets (at protein level).</text>
</comment>
<comment type="tissue specificity">
    <molecule>Isoform 3</molecule>
    <text evidence="9">Expressed in lung and platelets (at protein level).</text>
</comment>
<comment type="developmental stage">
    <text evidence="12">Expressed in the venous vessels of the heart and skin at 15.5 dpc.</text>
</comment>
<comment type="domain">
    <text evidence="1">The Ig-like C2-type domains 2 and 3 contribute to formation of the complex with BDKRB2 and in regulation of its activity.</text>
</comment>
<comment type="PTM">
    <text evidence="2 8">Phosphorylated on Ser and Tyr residues by src kinases after cellular activation (PubMed:16731527). Upon activation, phosphorylated on Ser-718 which probably initiates the dissociation of the membrane-interaction segment (residues 698-718) from the cell membrane allowing the sequential phosphorylation of Tyr-702 and Tyr-679 (By similarity). Constitutively phosphorylated on Ser-723 in resting platelets (By similarity). Phosphorylated on tyrosine residues by FER and FES in response to FCER1 activation (PubMed:16731527). In endothelial cells Fyn mediates mechanical-force (stretch or pull) induced tyrosine phosphorylation (By similarity).</text>
</comment>
<comment type="PTM">
    <text evidence="2">Palmitoylation by ZDHHC21 is necessary for cell surface expression in endothelial cells and enrichment in membrane rafts.</text>
</comment>
<comment type="disruption phenotype">
    <text evidence="10">Mice show reduced atherosclerotic lesions. There is down-regulation of ICAM-1 in endothelial cells at the lesion periphery, and reduced disruption of Cx43 junctional staining at arterial branch points and in the descending aorta.</text>
</comment>
<comment type="online information" name="Functional Glycomics Gateway - Glycan Binding">
    <link uri="http://www.functionalglycomics.org/glycomics/GBPServlet?&amp;operationType=view&amp;cbpId=cbp_mou_Itlect_191"/>
    <text>PECAM-1</text>
</comment>
<reference key="1">
    <citation type="journal article" date="1993" name="Proc. Natl. Acad. Sci. U.S.A.">
        <title>Molecular cloning and adhesive properties of murine platelet/endothelial cell adhesion molecule 1.</title>
        <authorList>
            <person name="Xie Y."/>
            <person name="Muller W.A."/>
        </authorList>
    </citation>
    <scope>NUCLEOTIDE SEQUENCE [MRNA] (ISOFORM 1)</scope>
    <source>
        <strain>BALB/cJ</strain>
        <tissue>Lung</tissue>
    </source>
</reference>
<reference key="2">
    <citation type="journal article" date="2005" name="Science">
        <title>The transcriptional landscape of the mammalian genome.</title>
        <authorList>
            <person name="Carninci P."/>
            <person name="Kasukawa T."/>
            <person name="Katayama S."/>
            <person name="Gough J."/>
            <person name="Frith M.C."/>
            <person name="Maeda N."/>
            <person name="Oyama R."/>
            <person name="Ravasi T."/>
            <person name="Lenhard B."/>
            <person name="Wells C."/>
            <person name="Kodzius R."/>
            <person name="Shimokawa K."/>
            <person name="Bajic V.B."/>
            <person name="Brenner S.E."/>
            <person name="Batalov S."/>
            <person name="Forrest A.R."/>
            <person name="Zavolan M."/>
            <person name="Davis M.J."/>
            <person name="Wilming L.G."/>
            <person name="Aidinis V."/>
            <person name="Allen J.E."/>
            <person name="Ambesi-Impiombato A."/>
            <person name="Apweiler R."/>
            <person name="Aturaliya R.N."/>
            <person name="Bailey T.L."/>
            <person name="Bansal M."/>
            <person name="Baxter L."/>
            <person name="Beisel K.W."/>
            <person name="Bersano T."/>
            <person name="Bono H."/>
            <person name="Chalk A.M."/>
            <person name="Chiu K.P."/>
            <person name="Choudhary V."/>
            <person name="Christoffels A."/>
            <person name="Clutterbuck D.R."/>
            <person name="Crowe M.L."/>
            <person name="Dalla E."/>
            <person name="Dalrymple B.P."/>
            <person name="de Bono B."/>
            <person name="Della Gatta G."/>
            <person name="di Bernardo D."/>
            <person name="Down T."/>
            <person name="Engstrom P."/>
            <person name="Fagiolini M."/>
            <person name="Faulkner G."/>
            <person name="Fletcher C.F."/>
            <person name="Fukushima T."/>
            <person name="Furuno M."/>
            <person name="Futaki S."/>
            <person name="Gariboldi M."/>
            <person name="Georgii-Hemming P."/>
            <person name="Gingeras T.R."/>
            <person name="Gojobori T."/>
            <person name="Green R.E."/>
            <person name="Gustincich S."/>
            <person name="Harbers M."/>
            <person name="Hayashi Y."/>
            <person name="Hensch T.K."/>
            <person name="Hirokawa N."/>
            <person name="Hill D."/>
            <person name="Huminiecki L."/>
            <person name="Iacono M."/>
            <person name="Ikeo K."/>
            <person name="Iwama A."/>
            <person name="Ishikawa T."/>
            <person name="Jakt M."/>
            <person name="Kanapin A."/>
            <person name="Katoh M."/>
            <person name="Kawasawa Y."/>
            <person name="Kelso J."/>
            <person name="Kitamura H."/>
            <person name="Kitano H."/>
            <person name="Kollias G."/>
            <person name="Krishnan S.P."/>
            <person name="Kruger A."/>
            <person name="Kummerfeld S.K."/>
            <person name="Kurochkin I.V."/>
            <person name="Lareau L.F."/>
            <person name="Lazarevic D."/>
            <person name="Lipovich L."/>
            <person name="Liu J."/>
            <person name="Liuni S."/>
            <person name="McWilliam S."/>
            <person name="Madan Babu M."/>
            <person name="Madera M."/>
            <person name="Marchionni L."/>
            <person name="Matsuda H."/>
            <person name="Matsuzawa S."/>
            <person name="Miki H."/>
            <person name="Mignone F."/>
            <person name="Miyake S."/>
            <person name="Morris K."/>
            <person name="Mottagui-Tabar S."/>
            <person name="Mulder N."/>
            <person name="Nakano N."/>
            <person name="Nakauchi H."/>
            <person name="Ng P."/>
            <person name="Nilsson R."/>
            <person name="Nishiguchi S."/>
            <person name="Nishikawa S."/>
            <person name="Nori F."/>
            <person name="Ohara O."/>
            <person name="Okazaki Y."/>
            <person name="Orlando V."/>
            <person name="Pang K.C."/>
            <person name="Pavan W.J."/>
            <person name="Pavesi G."/>
            <person name="Pesole G."/>
            <person name="Petrovsky N."/>
            <person name="Piazza S."/>
            <person name="Reed J."/>
            <person name="Reid J.F."/>
            <person name="Ring B.Z."/>
            <person name="Ringwald M."/>
            <person name="Rost B."/>
            <person name="Ruan Y."/>
            <person name="Salzberg S.L."/>
            <person name="Sandelin A."/>
            <person name="Schneider C."/>
            <person name="Schoenbach C."/>
            <person name="Sekiguchi K."/>
            <person name="Semple C.A."/>
            <person name="Seno S."/>
            <person name="Sessa L."/>
            <person name="Sheng Y."/>
            <person name="Shibata Y."/>
            <person name="Shimada H."/>
            <person name="Shimada K."/>
            <person name="Silva D."/>
            <person name="Sinclair B."/>
            <person name="Sperling S."/>
            <person name="Stupka E."/>
            <person name="Sugiura K."/>
            <person name="Sultana R."/>
            <person name="Takenaka Y."/>
            <person name="Taki K."/>
            <person name="Tammoja K."/>
            <person name="Tan S.L."/>
            <person name="Tang S."/>
            <person name="Taylor M.S."/>
            <person name="Tegner J."/>
            <person name="Teichmann S.A."/>
            <person name="Ueda H.R."/>
            <person name="van Nimwegen E."/>
            <person name="Verardo R."/>
            <person name="Wei C.L."/>
            <person name="Yagi K."/>
            <person name="Yamanishi H."/>
            <person name="Zabarovsky E."/>
            <person name="Zhu S."/>
            <person name="Zimmer A."/>
            <person name="Hide W."/>
            <person name="Bult C."/>
            <person name="Grimmond S.M."/>
            <person name="Teasdale R.D."/>
            <person name="Liu E.T."/>
            <person name="Brusic V."/>
            <person name="Quackenbush J."/>
            <person name="Wahlestedt C."/>
            <person name="Mattick J.S."/>
            <person name="Hume D.A."/>
            <person name="Kai C."/>
            <person name="Sasaki D."/>
            <person name="Tomaru Y."/>
            <person name="Fukuda S."/>
            <person name="Kanamori-Katayama M."/>
            <person name="Suzuki M."/>
            <person name="Aoki J."/>
            <person name="Arakawa T."/>
            <person name="Iida J."/>
            <person name="Imamura K."/>
            <person name="Itoh M."/>
            <person name="Kato T."/>
            <person name="Kawaji H."/>
            <person name="Kawagashira N."/>
            <person name="Kawashima T."/>
            <person name="Kojima M."/>
            <person name="Kondo S."/>
            <person name="Konno H."/>
            <person name="Nakano K."/>
            <person name="Ninomiya N."/>
            <person name="Nishio T."/>
            <person name="Okada M."/>
            <person name="Plessy C."/>
            <person name="Shibata K."/>
            <person name="Shiraki T."/>
            <person name="Suzuki S."/>
            <person name="Tagami M."/>
            <person name="Waki K."/>
            <person name="Watahiki A."/>
            <person name="Okamura-Oho Y."/>
            <person name="Suzuki H."/>
            <person name="Kawai J."/>
            <person name="Hayashizaki Y."/>
        </authorList>
    </citation>
    <scope>NUCLEOTIDE SEQUENCE [LARGE SCALE MRNA] (ISOFORM 4)</scope>
    <source>
        <strain>C57BL/6J</strain>
        <tissue>Stomach</tissue>
    </source>
</reference>
<reference key="3">
    <citation type="journal article" date="2009" name="PLoS Biol.">
        <title>Lineage-specific biology revealed by a finished genome assembly of the mouse.</title>
        <authorList>
            <person name="Church D.M."/>
            <person name="Goodstadt L."/>
            <person name="Hillier L.W."/>
            <person name="Zody M.C."/>
            <person name="Goldstein S."/>
            <person name="She X."/>
            <person name="Bult C.J."/>
            <person name="Agarwala R."/>
            <person name="Cherry J.L."/>
            <person name="DiCuccio M."/>
            <person name="Hlavina W."/>
            <person name="Kapustin Y."/>
            <person name="Meric P."/>
            <person name="Maglott D."/>
            <person name="Birtle Z."/>
            <person name="Marques A.C."/>
            <person name="Graves T."/>
            <person name="Zhou S."/>
            <person name="Teague B."/>
            <person name="Potamousis K."/>
            <person name="Churas C."/>
            <person name="Place M."/>
            <person name="Herschleb J."/>
            <person name="Runnheim R."/>
            <person name="Forrest D."/>
            <person name="Amos-Landgraf J."/>
            <person name="Schwartz D.C."/>
            <person name="Cheng Z."/>
            <person name="Lindblad-Toh K."/>
            <person name="Eichler E.E."/>
            <person name="Ponting C.P."/>
        </authorList>
    </citation>
    <scope>NUCLEOTIDE SEQUENCE [LARGE SCALE GENOMIC DNA]</scope>
    <source>
        <strain>C57BL/6J</strain>
    </source>
</reference>
<reference key="4">
    <citation type="submission" date="2005-07" db="EMBL/GenBank/DDBJ databases">
        <authorList>
            <person name="Mural R.J."/>
            <person name="Adams M.D."/>
            <person name="Myers E.W."/>
            <person name="Smith H.O."/>
            <person name="Venter J.C."/>
        </authorList>
    </citation>
    <scope>NUCLEOTIDE SEQUENCE [LARGE SCALE GENOMIC DNA]</scope>
</reference>
<reference key="5">
    <citation type="journal article" date="2004" name="Genome Res.">
        <title>The status, quality, and expansion of the NIH full-length cDNA project: the Mammalian Gene Collection (MGC).</title>
        <authorList>
            <consortium name="The MGC Project Team"/>
        </authorList>
    </citation>
    <scope>NUCLEOTIDE SEQUENCE [LARGE SCALE MRNA] (ISOFORM 2)</scope>
    <source>
        <strain>C57BL/6J</strain>
        <strain>FVB/N</strain>
        <tissue>Mammary tumor</tissue>
    </source>
</reference>
<reference key="6">
    <citation type="journal article" date="1992" name="Am. J. Pathol.">
        <title>Association of murine CD31 with transmigrating lymphocytes following antigenic stimulation.</title>
        <authorList>
            <person name="Bogen S.A."/>
            <person name="Baldwin H.S."/>
            <person name="Watkins S.C."/>
            <person name="Albelda S.M."/>
            <person name="Abbas A.K."/>
        </authorList>
    </citation>
    <scope>PROTEIN SEQUENCE OF 18-26</scope>
    <source>
        <tissue>Heart</tissue>
    </source>
</reference>
<reference key="7">
    <citation type="journal article" date="2006" name="J. Biol. Chem.">
        <title>Fer and Fps/Fes participate in a Lyn-dependent pathway from FcepsilonRI to platelet-endothelial cell adhesion molecule 1 to limit mast cell activation.</title>
        <authorList>
            <person name="Udell C.M."/>
            <person name="Samayawardhena L.A."/>
            <person name="Kawakami Y."/>
            <person name="Kawakami T."/>
            <person name="Craig A.W."/>
        </authorList>
    </citation>
    <scope>PHOSPHORYLATION AT TYR-679 AND TYR-702 BY FES AND FER</scope>
    <scope>MUTAGENESIS OF TYR-679; TYR-702 AND TYR-717</scope>
</reference>
<reference key="8">
    <citation type="journal article" date="2007" name="J. Immunol.">
        <title>Quantitative time-resolved phosphoproteomic analysis of mast cell signaling.</title>
        <authorList>
            <person name="Cao L."/>
            <person name="Yu K."/>
            <person name="Banh C."/>
            <person name="Nguyen V."/>
            <person name="Ritz A."/>
            <person name="Raphael B.J."/>
            <person name="Kawakami Y."/>
            <person name="Kawakami T."/>
            <person name="Salomon A.R."/>
        </authorList>
    </citation>
    <scope>PHOSPHORYLATION [LARGE SCALE ANALYSIS] AT TYR-702</scope>
    <scope>IDENTIFICATION BY MASS SPECTROMETRY [LARGE SCALE ANALYSIS]</scope>
    <source>
        <tissue>Mast cell</tissue>
    </source>
</reference>
<reference key="9">
    <citation type="journal article" date="2008" name="Dis. Model. Mech.">
        <title>PECAM-1 is a critical mediator of atherosclerosis.</title>
        <authorList>
            <person name="Stevens H.Y."/>
            <person name="Melchior B."/>
            <person name="Bell K.S."/>
            <person name="Yun S."/>
            <person name="Yeh J.C."/>
            <person name="Frangos J.A."/>
        </authorList>
    </citation>
    <scope>FUNCTION</scope>
    <scope>DISRUPTION PHENOTYPE</scope>
</reference>
<reference key="10">
    <citation type="journal article" date="2008" name="J. Cell Sci.">
        <title>An alternatively spliced isoform of PECAM-1 is expressed at high levels in human and murine tissues, and suggests a novel role for the C-terminus of PECAM-1 in cytoprotective signaling.</title>
        <authorList>
            <person name="Bergom C."/>
            <person name="Paddock C."/>
            <person name="Gao C."/>
            <person name="Holyst T."/>
            <person name="Newman D.K."/>
            <person name="Newman P.J."/>
        </authorList>
    </citation>
    <scope>ALTERNATIVE SPLICING (ISOFORMS 2 AND 3)</scope>
    <scope>TISSUE SPECIFICITY (ISOFORMS 1 AND 3)</scope>
</reference>
<reference key="11">
    <citation type="journal article" date="2009" name="Nat. Biotechnol.">
        <title>Mass-spectrometric identification and relative quantification of N-linked cell surface glycoproteins.</title>
        <authorList>
            <person name="Wollscheid B."/>
            <person name="Bausch-Fluck D."/>
            <person name="Henderson C."/>
            <person name="O'Brien R."/>
            <person name="Bibel M."/>
            <person name="Schiess R."/>
            <person name="Aebersold R."/>
            <person name="Watts J.D."/>
        </authorList>
    </citation>
    <scope>GLYCOSYLATION [LARGE SCALE ANALYSIS] AT ASN-74; ASN-141; ASN-360; ASN-424 AND ASN-540</scope>
</reference>
<reference key="12">
    <citation type="journal article" date="2010" name="Cell">
        <title>A tissue-specific atlas of mouse protein phosphorylation and expression.</title>
        <authorList>
            <person name="Huttlin E.L."/>
            <person name="Jedrychowski M.P."/>
            <person name="Elias J.E."/>
            <person name="Goswami T."/>
            <person name="Rad R."/>
            <person name="Beausoleil S.A."/>
            <person name="Villen J."/>
            <person name="Haas W."/>
            <person name="Sowa M.E."/>
            <person name="Gygi S.P."/>
        </authorList>
    </citation>
    <scope>IDENTIFICATION BY MASS SPECTROMETRY [LARGE SCALE ANALYSIS]</scope>
    <source>
        <tissue>Brown adipose tissue</tissue>
        <tissue>Heart</tissue>
        <tissue>Kidney</tissue>
        <tissue>Liver</tissue>
        <tissue>Lung</tissue>
        <tissue>Pancreas</tissue>
        <tissue>Spleen</tissue>
    </source>
</reference>
<reference key="13">
    <citation type="journal article" date="2017" name="Circ. Res.">
        <title>Polydom Is an Extracellular Matrix Protein Involved in Lymphatic Vessel Remodeling.</title>
        <authorList>
            <person name="Morooka N."/>
            <person name="Futaki S."/>
            <person name="Sato-Nishiuchi R."/>
            <person name="Nishino M."/>
            <person name="Totani Y."/>
            <person name="Shimono C."/>
            <person name="Nakano I."/>
            <person name="Nakajima H."/>
            <person name="Mochizuki N."/>
            <person name="Sekiguchi K."/>
        </authorList>
    </citation>
    <scope>DEVELOPMENTAL STAGE</scope>
</reference>
<accession>Q08481</accession>
<accession>B1ARB1</accession>
<accession>B1ARB2</accession>
<accession>Q3TES6</accession>
<accession>Q922E0</accession>
<gene>
    <name type="primary">Pecam1</name>
    <name type="synonym">Pecam</name>
    <name type="synonym">Pecam-1</name>
</gene>
<evidence type="ECO:0000250" key="1"/>
<evidence type="ECO:0000250" key="2">
    <source>
        <dbReference type="UniProtKB" id="P16284"/>
    </source>
</evidence>
<evidence type="ECO:0000250" key="3">
    <source>
        <dbReference type="UniProtKB" id="P51866"/>
    </source>
</evidence>
<evidence type="ECO:0000255" key="4"/>
<evidence type="ECO:0000255" key="5">
    <source>
        <dbReference type="PROSITE-ProRule" id="PRU00114"/>
    </source>
</evidence>
<evidence type="ECO:0000256" key="6">
    <source>
        <dbReference type="SAM" id="MobiDB-lite"/>
    </source>
</evidence>
<evidence type="ECO:0000269" key="7">
    <source>
    </source>
</evidence>
<evidence type="ECO:0000269" key="8">
    <source>
    </source>
</evidence>
<evidence type="ECO:0000269" key="9">
    <source>
    </source>
</evidence>
<evidence type="ECO:0000269" key="10">
    <source>
    </source>
</evidence>
<evidence type="ECO:0000269" key="11">
    <source>
    </source>
</evidence>
<evidence type="ECO:0000269" key="12">
    <source>
    </source>
</evidence>
<evidence type="ECO:0000303" key="13">
    <source>
    </source>
</evidence>
<evidence type="ECO:0000303" key="14">
    <source>
    </source>
</evidence>
<evidence type="ECO:0000305" key="15"/>
<evidence type="ECO:0000305" key="16">
    <source>
    </source>
</evidence>
<evidence type="ECO:0007744" key="17">
    <source>
    </source>
</evidence>
<keyword id="KW-0025">Alternative splicing</keyword>
<keyword id="KW-0130">Cell adhesion</keyword>
<keyword id="KW-0965">Cell junction</keyword>
<keyword id="KW-1003">Cell membrane</keyword>
<keyword id="KW-0903">Direct protein sequencing</keyword>
<keyword id="KW-1015">Disulfide bond</keyword>
<keyword id="KW-0325">Glycoprotein</keyword>
<keyword id="KW-0393">Immunoglobulin domain</keyword>
<keyword id="KW-0449">Lipoprotein</keyword>
<keyword id="KW-0472">Membrane</keyword>
<keyword id="KW-0564">Palmitate</keyword>
<keyword id="KW-0597">Phosphoprotein</keyword>
<keyword id="KW-1185">Reference proteome</keyword>
<keyword id="KW-0677">Repeat</keyword>
<keyword id="KW-0732">Signal</keyword>
<keyword id="KW-0812">Transmembrane</keyword>
<keyword id="KW-1133">Transmembrane helix</keyword>
<feature type="signal peptide" evidence="7">
    <location>
        <begin position="1"/>
        <end position="17"/>
    </location>
</feature>
<feature type="chain" id="PRO_0000014896" description="Platelet endothelial cell adhesion molecule">
    <location>
        <begin position="18"/>
        <end position="727"/>
    </location>
</feature>
<feature type="topological domain" description="Extracellular" evidence="4">
    <location>
        <begin position="18"/>
        <end position="590"/>
    </location>
</feature>
<feature type="transmembrane region" description="Helical" evidence="4">
    <location>
        <begin position="591"/>
        <end position="609"/>
    </location>
</feature>
<feature type="topological domain" description="Cytoplasmic" evidence="4">
    <location>
        <begin position="610"/>
        <end position="727"/>
    </location>
</feature>
<feature type="domain" description="Ig-like C2-type 1">
    <location>
        <begin position="40"/>
        <end position="126"/>
    </location>
</feature>
<feature type="domain" description="Ig-like C2-type 2">
    <location>
        <begin position="135"/>
        <end position="213"/>
    </location>
</feature>
<feature type="domain" description="Ig-like C2-type 3">
    <location>
        <begin position="225"/>
        <end position="309"/>
    </location>
</feature>
<feature type="domain" description="Ig-like C2-type 4">
    <location>
        <begin position="315"/>
        <end position="391"/>
    </location>
</feature>
<feature type="domain" description="Ig-like C2-type 5">
    <location>
        <begin position="413"/>
        <end position="472"/>
    </location>
</feature>
<feature type="domain" description="Ig-like C2-type 6">
    <location>
        <begin position="488"/>
        <end position="578"/>
    </location>
</feature>
<feature type="region of interest" description="Disordered" evidence="6">
    <location>
        <begin position="642"/>
        <end position="672"/>
    </location>
</feature>
<feature type="region of interest" description="Membrane-bound segment which detaches upon phosphorylation" evidence="2">
    <location>
        <begin position="698"/>
        <end position="718"/>
    </location>
</feature>
<feature type="region of interest" description="May play a role in cytoprotective signaling" evidence="1">
    <location>
        <begin position="710"/>
        <end position="727"/>
    </location>
</feature>
<feature type="short sequence motif" description="ITIM motif 1" evidence="2">
    <location>
        <begin position="677"/>
        <end position="682"/>
    </location>
</feature>
<feature type="short sequence motif" description="ITIM motif 2" evidence="2">
    <location>
        <begin position="700"/>
        <end position="705"/>
    </location>
</feature>
<feature type="modified residue" description="Phosphotyrosine; by FER" evidence="16">
    <location>
        <position position="679"/>
    </location>
</feature>
<feature type="modified residue" description="Phosphotyrosine; by FER" evidence="8 17">
    <location>
        <position position="702"/>
    </location>
</feature>
<feature type="modified residue" description="Phosphoserine" evidence="2">
    <location>
        <position position="718"/>
    </location>
</feature>
<feature type="modified residue" description="Phosphoserine" evidence="2">
    <location>
        <position position="723"/>
    </location>
</feature>
<feature type="lipid moiety-binding region" description="S-palmitoyl cysteine" evidence="1">
    <location>
        <position position="611"/>
    </location>
</feature>
<feature type="glycosylation site" description="N-linked (GlcNAc...) asparagine" evidence="11">
    <location>
        <position position="74"/>
    </location>
</feature>
<feature type="glycosylation site" description="N-linked (GlcNAc...) asparagine" evidence="11">
    <location>
        <position position="141"/>
    </location>
</feature>
<feature type="glycosylation site" description="N-linked (GlcNAc...) asparagine" evidence="4">
    <location>
        <position position="309"/>
    </location>
</feature>
<feature type="glycosylation site" description="N-linked (GlcNAc...) asparagine" evidence="4">
    <location>
        <position position="345"/>
    </location>
</feature>
<feature type="glycosylation site" description="N-linked (GlcNAc...) asparagine" evidence="11">
    <location>
        <position position="360"/>
    </location>
</feature>
<feature type="glycosylation site" description="N-linked (GlcNAc...) asparagine" evidence="11">
    <location>
        <position position="424"/>
    </location>
</feature>
<feature type="glycosylation site" description="N-linked (GlcNAc...) asparagine" evidence="11">
    <location>
        <position position="540"/>
    </location>
</feature>
<feature type="disulfide bond" evidence="5">
    <location>
        <begin position="47"/>
        <end position="99"/>
    </location>
</feature>
<feature type="disulfide bond" evidence="5">
    <location>
        <begin position="142"/>
        <end position="195"/>
    </location>
</feature>
<feature type="disulfide bond" evidence="5">
    <location>
        <begin position="245"/>
        <end position="293"/>
    </location>
</feature>
<feature type="disulfide bond" evidence="5">
    <location>
        <begin position="336"/>
        <end position="375"/>
    </location>
</feature>
<feature type="disulfide bond" evidence="5">
    <location>
        <begin position="420"/>
        <end position="465"/>
    </location>
</feature>
<feature type="disulfide bond" evidence="5">
    <location>
        <begin position="512"/>
        <end position="561"/>
    </location>
</feature>
<feature type="splice variant" id="VSP_038723" description="In isoform 4." evidence="14">
    <location>
        <begin position="119"/>
        <end position="219"/>
    </location>
</feature>
<feature type="splice variant" id="VSP_038724" description="In isoform 2." evidence="13">
    <original>ALGTRATETVYSEIRKVDPNLMENRYSRTEGSLNGT</original>
    <variation>ENGRLP</variation>
    <location>
        <begin position="692"/>
        <end position="727"/>
    </location>
</feature>
<feature type="splice variant" id="VSP_038725" description="In isoform 3." evidence="15">
    <original>NLMENRYSRTEGSLNGT</original>
    <variation>KNGRLP</variation>
    <location>
        <begin position="711"/>
        <end position="727"/>
    </location>
</feature>
<feature type="mutagenesis site" description="Reduces tyrosine phosphorylation by FER by about 60%." evidence="8">
    <original>Y</original>
    <variation>F</variation>
    <location>
        <position position="679"/>
    </location>
</feature>
<feature type="mutagenesis site" description="Reduces tyrosine phosphorylation by FER by about 60%." evidence="8">
    <original>Y</original>
    <variation>F</variation>
    <location>
        <position position="702"/>
    </location>
</feature>
<feature type="mutagenesis site" description="No significant effect on phosphorylation by FER." evidence="8">
    <original>Y</original>
    <variation>F</variation>
    <location>
        <position position="717"/>
    </location>
</feature>
<feature type="sequence conflict" description="In Ref. 6; AA sequence." evidence="15" ref="6">
    <original>E</original>
    <variation>T</variation>
    <location>
        <position position="18"/>
    </location>
</feature>
<protein>
    <recommendedName>
        <fullName>Platelet endothelial cell adhesion molecule</fullName>
        <shortName>PECAM-1</shortName>
    </recommendedName>
    <cdAntigenName>CD31</cdAntigenName>
</protein>
<proteinExistence type="evidence at protein level"/>
<dbReference type="EMBL" id="L06039">
    <property type="protein sequence ID" value="AAA16230.1"/>
    <property type="molecule type" value="mRNA"/>
</dbReference>
<dbReference type="EMBL" id="AK169431">
    <property type="protein sequence ID" value="BAE41172.1"/>
    <property type="molecule type" value="mRNA"/>
</dbReference>
<dbReference type="EMBL" id="AL603664">
    <property type="status" value="NOT_ANNOTATED_CDS"/>
    <property type="molecule type" value="Genomic_DNA"/>
</dbReference>
<dbReference type="EMBL" id="CH466558">
    <property type="protein sequence ID" value="EDL34303.1"/>
    <property type="molecule type" value="Genomic_DNA"/>
</dbReference>
<dbReference type="EMBL" id="CH466558">
    <property type="protein sequence ID" value="EDL34304.1"/>
    <property type="molecule type" value="Genomic_DNA"/>
</dbReference>
<dbReference type="EMBL" id="CH466558">
    <property type="protein sequence ID" value="EDL34305.1"/>
    <property type="molecule type" value="Genomic_DNA"/>
</dbReference>
<dbReference type="EMBL" id="BC008519">
    <property type="protein sequence ID" value="AAH08519.1"/>
    <property type="molecule type" value="mRNA"/>
</dbReference>
<dbReference type="EMBL" id="BC085502">
    <property type="protein sequence ID" value="AAH85502.1"/>
    <property type="molecule type" value="mRNA"/>
</dbReference>
<dbReference type="CCDS" id="CCDS25558.1">
    <molecule id="Q08481-2"/>
</dbReference>
<dbReference type="CCDS" id="CCDS25559.1">
    <molecule id="Q08481-3"/>
</dbReference>
<dbReference type="CCDS" id="CCDS79068.1">
    <molecule id="Q08481-4"/>
</dbReference>
<dbReference type="CCDS" id="CCDS79069.1">
    <molecule id="Q08481-1"/>
</dbReference>
<dbReference type="RefSeq" id="NP_001027550.1">
    <molecule id="Q08481-2"/>
    <property type="nucleotide sequence ID" value="NM_001032378.2"/>
</dbReference>
<dbReference type="RefSeq" id="NP_001292086.1">
    <molecule id="Q08481-1"/>
    <property type="nucleotide sequence ID" value="NM_001305157.1"/>
</dbReference>
<dbReference type="RefSeq" id="NP_001292087.1">
    <molecule id="Q08481-4"/>
    <property type="nucleotide sequence ID" value="NM_001305158.1"/>
</dbReference>
<dbReference type="RefSeq" id="NP_032842.2">
    <molecule id="Q08481-3"/>
    <property type="nucleotide sequence ID" value="NM_008816.3"/>
</dbReference>
<dbReference type="RefSeq" id="XP_011247094.1">
    <property type="nucleotide sequence ID" value="XM_011248792.1"/>
</dbReference>
<dbReference type="BioGRID" id="202105">
    <property type="interactions" value="4"/>
</dbReference>
<dbReference type="FunCoup" id="Q08481">
    <property type="interactions" value="411"/>
</dbReference>
<dbReference type="IntAct" id="Q08481">
    <property type="interactions" value="4"/>
</dbReference>
<dbReference type="STRING" id="10090.ENSMUSP00000102408"/>
<dbReference type="GlyCosmos" id="Q08481">
    <property type="glycosylation" value="7 sites, No reported glycans"/>
</dbReference>
<dbReference type="GlyGen" id="Q08481">
    <property type="glycosylation" value="7 sites, 6 N-linked glycans (6 sites)"/>
</dbReference>
<dbReference type="iPTMnet" id="Q08481"/>
<dbReference type="PhosphoSitePlus" id="Q08481"/>
<dbReference type="SwissPalm" id="Q08481"/>
<dbReference type="jPOST" id="Q08481"/>
<dbReference type="PaxDb" id="10090-ENSMUSP00000079664"/>
<dbReference type="PeptideAtlas" id="Q08481"/>
<dbReference type="ProteomicsDB" id="288120">
    <molecule id="Q08481-1"/>
</dbReference>
<dbReference type="ProteomicsDB" id="288121">
    <molecule id="Q08481-2"/>
</dbReference>
<dbReference type="ProteomicsDB" id="288122">
    <molecule id="Q08481-3"/>
</dbReference>
<dbReference type="ProteomicsDB" id="288123">
    <molecule id="Q08481-4"/>
</dbReference>
<dbReference type="ABCD" id="Q08481">
    <property type="antibodies" value="44 sequenced antibodies"/>
</dbReference>
<dbReference type="Antibodypedia" id="58161">
    <property type="antibodies" value="4395 antibodies from 47 providers"/>
</dbReference>
<dbReference type="DNASU" id="18613"/>
<dbReference type="Ensembl" id="ENSMUST00000080853.11">
    <molecule id="Q08481-3"/>
    <property type="protein sequence ID" value="ENSMUSP00000079664.5"/>
    <property type="gene ID" value="ENSMUSG00000020717.20"/>
</dbReference>
<dbReference type="Ensembl" id="ENSMUST00000103069.10">
    <molecule id="Q08481-2"/>
    <property type="protein sequence ID" value="ENSMUSP00000099358.4"/>
    <property type="gene ID" value="ENSMUSG00000020717.20"/>
</dbReference>
<dbReference type="Ensembl" id="ENSMUST00000106796.9">
    <molecule id="Q08481-1"/>
    <property type="protein sequence ID" value="ENSMUSP00000102408.3"/>
    <property type="gene ID" value="ENSMUSG00000020717.20"/>
</dbReference>
<dbReference type="Ensembl" id="ENSMUST00000183610.8">
    <molecule id="Q08481-4"/>
    <property type="protein sequence ID" value="ENSMUSP00000138959.2"/>
    <property type="gene ID" value="ENSMUSG00000020717.20"/>
</dbReference>
<dbReference type="GeneID" id="18613"/>
<dbReference type="KEGG" id="mmu:18613"/>
<dbReference type="UCSC" id="uc007lze.2">
    <molecule id="Q08481-1"/>
    <property type="organism name" value="mouse"/>
</dbReference>
<dbReference type="UCSC" id="uc007lzf.2">
    <molecule id="Q08481-3"/>
    <property type="organism name" value="mouse"/>
</dbReference>
<dbReference type="UCSC" id="uc007lzg.2">
    <molecule id="Q08481-2"/>
    <property type="organism name" value="mouse"/>
</dbReference>
<dbReference type="UCSC" id="uc007lzh.2">
    <molecule id="Q08481-4"/>
    <property type="organism name" value="mouse"/>
</dbReference>
<dbReference type="AGR" id="MGI:97537"/>
<dbReference type="CTD" id="5175"/>
<dbReference type="MGI" id="MGI:97537">
    <property type="gene designation" value="Pecam1"/>
</dbReference>
<dbReference type="VEuPathDB" id="HostDB:ENSMUSG00000020717"/>
<dbReference type="eggNOG" id="ENOG502QW63">
    <property type="taxonomic scope" value="Eukaryota"/>
</dbReference>
<dbReference type="GeneTree" id="ENSGT01120000271918"/>
<dbReference type="HOGENOM" id="CLU_024558_0_0_1"/>
<dbReference type="InParanoid" id="Q08481"/>
<dbReference type="OMA" id="FLSCDYE"/>
<dbReference type="OrthoDB" id="53121at9989"/>
<dbReference type="TreeFam" id="TF338229"/>
<dbReference type="Reactome" id="R-MMU-114608">
    <property type="pathway name" value="Platelet degranulation"/>
</dbReference>
<dbReference type="Reactome" id="R-MMU-202733">
    <property type="pathway name" value="Cell surface interactions at the vascular wall"/>
</dbReference>
<dbReference type="Reactome" id="R-MMU-210990">
    <property type="pathway name" value="PECAM1 interactions"/>
</dbReference>
<dbReference type="Reactome" id="R-MMU-216083">
    <property type="pathway name" value="Integrin cell surface interactions"/>
</dbReference>
<dbReference type="Reactome" id="R-MMU-432142">
    <property type="pathway name" value="Platelet sensitization by LDL"/>
</dbReference>
<dbReference type="Reactome" id="R-MMU-6798695">
    <property type="pathway name" value="Neutrophil degranulation"/>
</dbReference>
<dbReference type="BioGRID-ORCS" id="18613">
    <property type="hits" value="1 hit in 62 CRISPR screens"/>
</dbReference>
<dbReference type="ChiTaRS" id="Pecam1">
    <property type="organism name" value="mouse"/>
</dbReference>
<dbReference type="PRO" id="PR:Q08481"/>
<dbReference type="Proteomes" id="UP000000589">
    <property type="component" value="Chromosome 11"/>
</dbReference>
<dbReference type="RNAct" id="Q08481">
    <property type="molecule type" value="protein"/>
</dbReference>
<dbReference type="Bgee" id="ENSMUSG00000020717">
    <property type="expression patterns" value="Expressed in right lung lobe and 177 other cell types or tissues"/>
</dbReference>
<dbReference type="ExpressionAtlas" id="Q08481">
    <property type="expression patterns" value="baseline and differential"/>
</dbReference>
<dbReference type="GO" id="GO:0071944">
    <property type="term" value="C:cell periphery"/>
    <property type="evidence" value="ECO:0000314"/>
    <property type="project" value="MGI"/>
</dbReference>
<dbReference type="GO" id="GO:0044291">
    <property type="term" value="C:cell-cell contact zone"/>
    <property type="evidence" value="ECO:0000314"/>
    <property type="project" value="MGI"/>
</dbReference>
<dbReference type="GO" id="GO:0005737">
    <property type="term" value="C:cytoplasm"/>
    <property type="evidence" value="ECO:0000314"/>
    <property type="project" value="MGI"/>
</dbReference>
<dbReference type="GO" id="GO:0005829">
    <property type="term" value="C:cytosol"/>
    <property type="evidence" value="ECO:0007669"/>
    <property type="project" value="Ensembl"/>
</dbReference>
<dbReference type="GO" id="GO:0009897">
    <property type="term" value="C:external side of plasma membrane"/>
    <property type="evidence" value="ECO:0000314"/>
    <property type="project" value="BHF-UCL"/>
</dbReference>
<dbReference type="GO" id="GO:0005615">
    <property type="term" value="C:extracellular space"/>
    <property type="evidence" value="ECO:0007669"/>
    <property type="project" value="Ensembl"/>
</dbReference>
<dbReference type="GO" id="GO:0016020">
    <property type="term" value="C:membrane"/>
    <property type="evidence" value="ECO:0000314"/>
    <property type="project" value="MGI"/>
</dbReference>
<dbReference type="GO" id="GO:0045121">
    <property type="term" value="C:membrane raft"/>
    <property type="evidence" value="ECO:0000314"/>
    <property type="project" value="MGI"/>
</dbReference>
<dbReference type="GO" id="GO:0005730">
    <property type="term" value="C:nucleolus"/>
    <property type="evidence" value="ECO:0007669"/>
    <property type="project" value="Ensembl"/>
</dbReference>
<dbReference type="GO" id="GO:0005654">
    <property type="term" value="C:nucleoplasm"/>
    <property type="evidence" value="ECO:0007669"/>
    <property type="project" value="Ensembl"/>
</dbReference>
<dbReference type="GO" id="GO:0005886">
    <property type="term" value="C:plasma membrane"/>
    <property type="evidence" value="ECO:0000314"/>
    <property type="project" value="MGI"/>
</dbReference>
<dbReference type="GO" id="GO:0032991">
    <property type="term" value="C:protein-containing complex"/>
    <property type="evidence" value="ECO:0007669"/>
    <property type="project" value="Ensembl"/>
</dbReference>
<dbReference type="GO" id="GO:0030485">
    <property type="term" value="C:smooth muscle contractile fiber"/>
    <property type="evidence" value="ECO:0000314"/>
    <property type="project" value="MGI"/>
</dbReference>
<dbReference type="GO" id="GO:0042803">
    <property type="term" value="F:protein homodimerization activity"/>
    <property type="evidence" value="ECO:0007669"/>
    <property type="project" value="Ensembl"/>
</dbReference>
<dbReference type="GO" id="GO:0001525">
    <property type="term" value="P:angiogenesis"/>
    <property type="evidence" value="ECO:0000314"/>
    <property type="project" value="MGI"/>
</dbReference>
<dbReference type="GO" id="GO:0070830">
    <property type="term" value="P:bicellular tight junction assembly"/>
    <property type="evidence" value="ECO:0007669"/>
    <property type="project" value="Ensembl"/>
</dbReference>
<dbReference type="GO" id="GO:0007155">
    <property type="term" value="P:cell adhesion"/>
    <property type="evidence" value="ECO:0000314"/>
    <property type="project" value="MGI"/>
</dbReference>
<dbReference type="GO" id="GO:0007166">
    <property type="term" value="P:cell surface receptor signaling pathway"/>
    <property type="evidence" value="ECO:0007669"/>
    <property type="project" value="Ensembl"/>
</dbReference>
<dbReference type="GO" id="GO:0071260">
    <property type="term" value="P:cellular response to mechanical stimulus"/>
    <property type="evidence" value="ECO:0007669"/>
    <property type="project" value="Ensembl"/>
</dbReference>
<dbReference type="GO" id="GO:0050982">
    <property type="term" value="P:detection of mechanical stimulus"/>
    <property type="evidence" value="ECO:0007669"/>
    <property type="project" value="Ensembl"/>
</dbReference>
<dbReference type="GO" id="GO:0050904">
    <property type="term" value="P:diapedesis"/>
    <property type="evidence" value="ECO:0007669"/>
    <property type="project" value="Ensembl"/>
</dbReference>
<dbReference type="GO" id="GO:0043542">
    <property type="term" value="P:endothelial cell migration"/>
    <property type="evidence" value="ECO:0000314"/>
    <property type="project" value="MGI"/>
</dbReference>
<dbReference type="GO" id="GO:0001886">
    <property type="term" value="P:endothelial cell morphogenesis"/>
    <property type="evidence" value="ECO:0000315"/>
    <property type="project" value="MGI"/>
</dbReference>
<dbReference type="GO" id="GO:0090673">
    <property type="term" value="P:endothelial cell-matrix adhesion"/>
    <property type="evidence" value="ECO:0000315"/>
    <property type="project" value="MGI"/>
</dbReference>
<dbReference type="GO" id="GO:0061028">
    <property type="term" value="P:establishment of endothelial barrier"/>
    <property type="evidence" value="ECO:0007669"/>
    <property type="project" value="Ensembl"/>
</dbReference>
<dbReference type="GO" id="GO:0072011">
    <property type="term" value="P:glomerular endothelium development"/>
    <property type="evidence" value="ECO:0007669"/>
    <property type="project" value="Ensembl"/>
</dbReference>
<dbReference type="GO" id="GO:0007156">
    <property type="term" value="P:homophilic cell adhesion via plasma membrane adhesion molecules"/>
    <property type="evidence" value="ECO:0007669"/>
    <property type="project" value="Ensembl"/>
</dbReference>
<dbReference type="GO" id="GO:0007159">
    <property type="term" value="P:leukocyte cell-cell adhesion"/>
    <property type="evidence" value="ECO:0007669"/>
    <property type="project" value="Ensembl"/>
</dbReference>
<dbReference type="GO" id="GO:0035696">
    <property type="term" value="P:monocyte extravasation"/>
    <property type="evidence" value="ECO:0007669"/>
    <property type="project" value="Ensembl"/>
</dbReference>
<dbReference type="GO" id="GO:0072672">
    <property type="term" value="P:neutrophil extravasation"/>
    <property type="evidence" value="ECO:0007669"/>
    <property type="project" value="Ensembl"/>
</dbReference>
<dbReference type="GO" id="GO:0006909">
    <property type="term" value="P:phagocytosis"/>
    <property type="evidence" value="ECO:0007669"/>
    <property type="project" value="Ensembl"/>
</dbReference>
<dbReference type="GO" id="GO:0030335">
    <property type="term" value="P:positive regulation of cell migration"/>
    <property type="evidence" value="ECO:0007669"/>
    <property type="project" value="Ensembl"/>
</dbReference>
<dbReference type="GO" id="GO:0043410">
    <property type="term" value="P:positive regulation of MAPK cascade"/>
    <property type="evidence" value="ECO:0007669"/>
    <property type="project" value="Ensembl"/>
</dbReference>
<dbReference type="GO" id="GO:0051897">
    <property type="term" value="P:positive regulation of phosphatidylinositol 3-kinase/protein kinase B signal transduction"/>
    <property type="evidence" value="ECO:0007669"/>
    <property type="project" value="Ensembl"/>
</dbReference>
<dbReference type="GO" id="GO:0150107">
    <property type="term" value="P:positive regulation of protein localization to cell-cell junction"/>
    <property type="evidence" value="ECO:0007669"/>
    <property type="project" value="Ensembl"/>
</dbReference>
<dbReference type="GO" id="GO:0030334">
    <property type="term" value="P:regulation of cell migration"/>
    <property type="evidence" value="ECO:0000315"/>
    <property type="project" value="MGI"/>
</dbReference>
<dbReference type="GO" id="GO:0007266">
    <property type="term" value="P:Rho protein signal transduction"/>
    <property type="evidence" value="ECO:0000315"/>
    <property type="project" value="MGI"/>
</dbReference>
<dbReference type="GO" id="GO:0042311">
    <property type="term" value="P:vasodilation"/>
    <property type="evidence" value="ECO:0007669"/>
    <property type="project" value="Ensembl"/>
</dbReference>
<dbReference type="GO" id="GO:0042060">
    <property type="term" value="P:wound healing"/>
    <property type="evidence" value="ECO:0000315"/>
    <property type="project" value="MGI"/>
</dbReference>
<dbReference type="FunFam" id="2.60.40.10:FF:001745">
    <property type="entry name" value="Platelet and endothelial cell adhesion molecule 1"/>
    <property type="match status" value="1"/>
</dbReference>
<dbReference type="FunFam" id="2.60.40.10:FF:001919">
    <property type="entry name" value="Platelet endothelial cell adhesion molecule"/>
    <property type="match status" value="1"/>
</dbReference>
<dbReference type="Gene3D" id="2.60.40.10">
    <property type="entry name" value="Immunoglobulins"/>
    <property type="match status" value="4"/>
</dbReference>
<dbReference type="InterPro" id="IPR007110">
    <property type="entry name" value="Ig-like_dom"/>
</dbReference>
<dbReference type="InterPro" id="IPR036179">
    <property type="entry name" value="Ig-like_dom_sf"/>
</dbReference>
<dbReference type="InterPro" id="IPR013783">
    <property type="entry name" value="Ig-like_fold"/>
</dbReference>
<dbReference type="InterPro" id="IPR050488">
    <property type="entry name" value="Ig_Fc_receptor"/>
</dbReference>
<dbReference type="InterPro" id="IPR003599">
    <property type="entry name" value="Ig_sub"/>
</dbReference>
<dbReference type="InterPro" id="IPR003598">
    <property type="entry name" value="Ig_sub2"/>
</dbReference>
<dbReference type="InterPro" id="IPR040878">
    <property type="entry name" value="IL-40-like_Ig"/>
</dbReference>
<dbReference type="PANTHER" id="PTHR11481">
    <property type="entry name" value="IMMUNOGLOBULIN FC RECEPTOR"/>
    <property type="match status" value="1"/>
</dbReference>
<dbReference type="PANTHER" id="PTHR11481:SF5">
    <property type="entry name" value="PLATELET ENDOTHELIAL CELL ADHESION MOLECULE"/>
    <property type="match status" value="1"/>
</dbReference>
<dbReference type="Pfam" id="PF13895">
    <property type="entry name" value="Ig_2"/>
    <property type="match status" value="2"/>
</dbReference>
<dbReference type="Pfam" id="PF17736">
    <property type="entry name" value="Ig_C17orf99"/>
    <property type="match status" value="1"/>
</dbReference>
<dbReference type="SMART" id="SM00409">
    <property type="entry name" value="IG"/>
    <property type="match status" value="4"/>
</dbReference>
<dbReference type="SMART" id="SM00408">
    <property type="entry name" value="IGc2"/>
    <property type="match status" value="2"/>
</dbReference>
<dbReference type="SUPFAM" id="SSF48726">
    <property type="entry name" value="Immunoglobulin"/>
    <property type="match status" value="4"/>
</dbReference>
<dbReference type="PROSITE" id="PS50835">
    <property type="entry name" value="IG_LIKE"/>
    <property type="match status" value="3"/>
</dbReference>
<organism>
    <name type="scientific">Mus musculus</name>
    <name type="common">Mouse</name>
    <dbReference type="NCBI Taxonomy" id="10090"/>
    <lineage>
        <taxon>Eukaryota</taxon>
        <taxon>Metazoa</taxon>
        <taxon>Chordata</taxon>
        <taxon>Craniata</taxon>
        <taxon>Vertebrata</taxon>
        <taxon>Euteleostomi</taxon>
        <taxon>Mammalia</taxon>
        <taxon>Eutheria</taxon>
        <taxon>Euarchontoglires</taxon>
        <taxon>Glires</taxon>
        <taxon>Rodentia</taxon>
        <taxon>Myomorpha</taxon>
        <taxon>Muroidea</taxon>
        <taxon>Muridae</taxon>
        <taxon>Murinae</taxon>
        <taxon>Mus</taxon>
        <taxon>Mus</taxon>
    </lineage>
</organism>
<name>PECA1_MOUSE</name>
<sequence>MLLALGLTLVLYASLQAEENSFTINSIHMESLPSWEVMNGQQLTLECLVDISTTSKSRSQHRVLFYKDDAMVYNVTSREHTESYVIPQARVFHSGKYKCTVMLNNKEKTTIEYEVKVHGVSKPKVTLDKKEVTEGGVVTVNCSLQEEKPPIFFKIEKLEVGTKFVKRRIDKTSNENFVLMEFPIEAQDHVLVFRCQAGILSGFKLQESEPIRSEYVTVQESFSTPKFEIKPPGMIIEGDQLHIRCIVQVTHLVQEFTEIIIQKDKAIVATSKQSSEAVYSVMAMVEYSGHYTCKVESNRISKASSIMVNITELFPKPKLEFSSSRLDQGELLDLSCSVSGTPVANFTIQKEETVLSQYQNFSKIAEESDSGEYSCTAGIGKVVKRSGLVPIQVCEMLSKPSIFHDAKSEIIKGHAIGISCQSENGTAPITYHLMKAKSDFQTLEVTSNDPATFTDKPTRDMEYQCRADNCHSHPAVFSEILRVRVIAPVDEVVISILSSNEVQSGSEMVLRCSVKEGTSPITFQFYKEKEDRPFHQAVVNDTQAFWHNKQASKKQEGQYYCTASNRASSMRTSPRSSTLAVRVFLAPWKKGLIAVVVIGVVIATLIVAAKCYFLRKAKAKQKPVEMSRPAAPLLNSNSEKISEPSVEANSHYGYDDVSGNDAVKPINQNKDPQNMDVEYTEVEVSSLEPHQALGTRATETVYSEIRKVDPNLMENRYSRTEGSLNGT</sequence>